<gene>
    <name evidence="2" type="primary">Krt7</name>
    <name evidence="7" type="synonym">Kb7</name>
    <name evidence="10" type="synonym">Krt2-7</name>
</gene>
<comment type="function">
    <text evidence="1">Blocks interferon-dependent interphase and stimulates DNA synthesis in cells.</text>
</comment>
<comment type="subunit">
    <text evidence="1">Heterotetramer of two type I and two type II keratins. Interacts with eukaryotic translation initiator factor 3 (eIF3) subunit EIF3S10. Interacts with GPER1 (By similarity).</text>
</comment>
<comment type="PTM">
    <text evidence="2">Arg-15 is dimethylated, probably to asymmetric dimethylarginine.</text>
</comment>
<comment type="miscellaneous">
    <text evidence="8">There are two types of cytoskeletal and microfibrillar keratin: I (acidic; 40-55 kDa) and II (neutral to basic; 56-70 kDa).</text>
</comment>
<comment type="similarity">
    <text evidence="5">Belongs to the intermediate filament family.</text>
</comment>
<keyword id="KW-0007">Acetylation</keyword>
<keyword id="KW-0175">Coiled coil</keyword>
<keyword id="KW-0325">Glycoprotein</keyword>
<keyword id="KW-0403">Intermediate filament</keyword>
<keyword id="KW-1017">Isopeptide bond</keyword>
<keyword id="KW-0416">Keratin</keyword>
<keyword id="KW-0488">Methylation</keyword>
<keyword id="KW-0597">Phosphoprotein</keyword>
<keyword id="KW-1185">Reference proteome</keyword>
<keyword id="KW-0832">Ubl conjugation</keyword>
<accession>Q6IG12</accession>
<evidence type="ECO:0000250" key="1"/>
<evidence type="ECO:0000250" key="2">
    <source>
        <dbReference type="UniProtKB" id="P08729"/>
    </source>
</evidence>
<evidence type="ECO:0000250" key="3">
    <source>
        <dbReference type="UniProtKB" id="Q9DCV7"/>
    </source>
</evidence>
<evidence type="ECO:0000255" key="4"/>
<evidence type="ECO:0000255" key="5">
    <source>
        <dbReference type="PROSITE-ProRule" id="PRU01188"/>
    </source>
</evidence>
<evidence type="ECO:0000269" key="6">
    <source>
    </source>
</evidence>
<evidence type="ECO:0000303" key="7">
    <source>
    </source>
</evidence>
<evidence type="ECO:0000305" key="8"/>
<evidence type="ECO:0000312" key="9">
    <source>
        <dbReference type="EMBL" id="DAA02218.1"/>
    </source>
</evidence>
<evidence type="ECO:0000312" key="10">
    <source>
        <dbReference type="RGD" id="1310865"/>
    </source>
</evidence>
<evidence type="ECO:0007744" key="11">
    <source>
    </source>
</evidence>
<proteinExistence type="inferred from homology"/>
<name>K2C7_RAT</name>
<dbReference type="EMBL" id="AABR03058117">
    <property type="status" value="NOT_ANNOTATED_CDS"/>
    <property type="molecule type" value="Genomic_DNA"/>
</dbReference>
<dbReference type="EMBL" id="AABR03059386">
    <property type="status" value="NOT_ANNOTATED_CDS"/>
    <property type="molecule type" value="Genomic_DNA"/>
</dbReference>
<dbReference type="EMBL" id="BK003973">
    <property type="protein sequence ID" value="DAA02218.1"/>
    <property type="molecule type" value="mRNA"/>
</dbReference>
<dbReference type="RefSeq" id="NP_001041335.1">
    <property type="nucleotide sequence ID" value="NM_001047870.1"/>
</dbReference>
<dbReference type="SMR" id="Q6IG12"/>
<dbReference type="FunCoup" id="Q6IG12">
    <property type="interactions" value="52"/>
</dbReference>
<dbReference type="STRING" id="10116.ENSRNOP00000075566"/>
<dbReference type="GlyGen" id="Q6IG12">
    <property type="glycosylation" value="1 site"/>
</dbReference>
<dbReference type="iPTMnet" id="Q6IG12"/>
<dbReference type="PhosphoSitePlus" id="Q6IG12"/>
<dbReference type="jPOST" id="Q6IG12"/>
<dbReference type="PaxDb" id="10116-ENSRNOP00000010660"/>
<dbReference type="GeneID" id="300242"/>
<dbReference type="KEGG" id="rno:300242"/>
<dbReference type="AGR" id="RGD:1310865"/>
<dbReference type="CTD" id="3855"/>
<dbReference type="RGD" id="1310865">
    <property type="gene designation" value="Krt7"/>
</dbReference>
<dbReference type="eggNOG" id="ENOG502QURK">
    <property type="taxonomic scope" value="Eukaryota"/>
</dbReference>
<dbReference type="InParanoid" id="Q6IG12"/>
<dbReference type="PhylomeDB" id="Q6IG12"/>
<dbReference type="Reactome" id="R-RNO-6805567">
    <property type="pathway name" value="Keratinization"/>
</dbReference>
<dbReference type="Reactome" id="R-RNO-6809371">
    <property type="pathway name" value="Formation of the cornified envelope"/>
</dbReference>
<dbReference type="PRO" id="PR:Q6IG12"/>
<dbReference type="Proteomes" id="UP000002494">
    <property type="component" value="Unplaced"/>
</dbReference>
<dbReference type="GO" id="GO:0005737">
    <property type="term" value="C:cytoplasm"/>
    <property type="evidence" value="ECO:0000266"/>
    <property type="project" value="RGD"/>
</dbReference>
<dbReference type="GO" id="GO:0045095">
    <property type="term" value="C:keratin filament"/>
    <property type="evidence" value="ECO:0000318"/>
    <property type="project" value="GO_Central"/>
</dbReference>
<dbReference type="GO" id="GO:0030280">
    <property type="term" value="F:structural constituent of skin epidermis"/>
    <property type="evidence" value="ECO:0000318"/>
    <property type="project" value="GO_Central"/>
</dbReference>
<dbReference type="GO" id="GO:0045109">
    <property type="term" value="P:intermediate filament organization"/>
    <property type="evidence" value="ECO:0000318"/>
    <property type="project" value="GO_Central"/>
</dbReference>
<dbReference type="GO" id="GO:0031424">
    <property type="term" value="P:keratinization"/>
    <property type="evidence" value="ECO:0000318"/>
    <property type="project" value="GO_Central"/>
</dbReference>
<dbReference type="FunFam" id="1.20.5.1160:FF:000001">
    <property type="entry name" value="Keratin type II"/>
    <property type="match status" value="1"/>
</dbReference>
<dbReference type="FunFam" id="1.20.5.170:FF:000004">
    <property type="entry name" value="Keratin, type II cytoskeletal 5"/>
    <property type="match status" value="1"/>
</dbReference>
<dbReference type="FunFam" id="1.20.5.500:FF:000001">
    <property type="entry name" value="Type II keratin 23"/>
    <property type="match status" value="1"/>
</dbReference>
<dbReference type="Gene3D" id="1.20.5.170">
    <property type="match status" value="1"/>
</dbReference>
<dbReference type="Gene3D" id="1.20.5.500">
    <property type="entry name" value="Single helix bin"/>
    <property type="match status" value="1"/>
</dbReference>
<dbReference type="Gene3D" id="1.20.5.1160">
    <property type="entry name" value="Vasodilator-stimulated phosphoprotein"/>
    <property type="match status" value="1"/>
</dbReference>
<dbReference type="InterPro" id="IPR018039">
    <property type="entry name" value="IF_conserved"/>
</dbReference>
<dbReference type="InterPro" id="IPR039008">
    <property type="entry name" value="IF_rod_dom"/>
</dbReference>
<dbReference type="InterPro" id="IPR032444">
    <property type="entry name" value="Keratin_2_head"/>
</dbReference>
<dbReference type="InterPro" id="IPR003054">
    <property type="entry name" value="Keratin_II"/>
</dbReference>
<dbReference type="PANTHER" id="PTHR45616">
    <property type="entry name" value="GATA-TYPE DOMAIN-CONTAINING PROTEIN"/>
    <property type="match status" value="1"/>
</dbReference>
<dbReference type="PANTHER" id="PTHR45616:SF21">
    <property type="entry name" value="KERATIN, TYPE II CYTOSKELETAL 7"/>
    <property type="match status" value="1"/>
</dbReference>
<dbReference type="Pfam" id="PF00038">
    <property type="entry name" value="Filament"/>
    <property type="match status" value="1"/>
</dbReference>
<dbReference type="Pfam" id="PF16208">
    <property type="entry name" value="Keratin_2_head"/>
    <property type="match status" value="1"/>
</dbReference>
<dbReference type="PRINTS" id="PR01276">
    <property type="entry name" value="TYPE2KERATIN"/>
</dbReference>
<dbReference type="SMART" id="SM01391">
    <property type="entry name" value="Filament"/>
    <property type="match status" value="1"/>
</dbReference>
<dbReference type="SUPFAM" id="SSF64593">
    <property type="entry name" value="Intermediate filament protein, coiled coil region"/>
    <property type="match status" value="3"/>
</dbReference>
<dbReference type="SUPFAM" id="SSF46579">
    <property type="entry name" value="Prefoldin"/>
    <property type="match status" value="1"/>
</dbReference>
<dbReference type="PROSITE" id="PS00226">
    <property type="entry name" value="IF_ROD_1"/>
    <property type="match status" value="1"/>
</dbReference>
<dbReference type="PROSITE" id="PS51842">
    <property type="entry name" value="IF_ROD_2"/>
    <property type="match status" value="1"/>
</dbReference>
<sequence length="457" mass="50709">MSIHFSSRSTAYPGRGAQVRLSSGRASFGSRSLYGLGSSRPRVAVRSAYGGPVGAGIREITINQSLLAPLSVDIDPTIQQVRQEEREQIKTLNNKFASFIDKVRFLEQQNKMLETKWALLQEQKSAKSSQLPRIFEAQIAGLRQQLETLQLDGGRLEVELRNMQDVVEDFKNKYEEEINRRTAAENEFVLLKKDVDAAYTNKVELEAKADSLQDEINFLKTLHETELAELQSQISDTSVVLSMDNSRSLDLDGIIADVKAQYEEMANHSRAEAEAWYQTKFETLQAQAGKHGDDLRNTRNEIAEMNRSIQRLQAEIDTLKNQRAKLESSIAEAEEQGELAIKDAHAKQGELEAALQKAKQDVARQLREYQELLNTKLALDIEIATYRKLLEGEESRLSGDGMGPVNISVVNSTGGNGGKLIFGGTMGSNALSFSGGPGALRAYSIKTTSTTRRGTHN</sequence>
<feature type="initiator methionine" description="Removed" evidence="2">
    <location>
        <position position="1"/>
    </location>
</feature>
<feature type="chain" id="PRO_0000307638" description="Keratin, type II cytoskeletal 7">
    <location>
        <begin position="2"/>
        <end position="457"/>
    </location>
</feature>
<feature type="domain" description="IF rod" evidence="5">
    <location>
        <begin position="85"/>
        <end position="397"/>
    </location>
</feature>
<feature type="region of interest" description="Head" evidence="4">
    <location>
        <begin position="2"/>
        <end position="84"/>
    </location>
</feature>
<feature type="region of interest" description="Coil 1A" evidence="4">
    <location>
        <begin position="84"/>
        <end position="120"/>
    </location>
</feature>
<feature type="region of interest" description="Linker 1" evidence="4">
    <location>
        <begin position="121"/>
        <end position="138"/>
    </location>
</feature>
<feature type="region of interest" description="Coil 1B" evidence="4">
    <location>
        <begin position="139"/>
        <end position="230"/>
    </location>
</feature>
<feature type="region of interest" description="Linker 12" evidence="4">
    <location>
        <begin position="231"/>
        <end position="254"/>
    </location>
</feature>
<feature type="region of interest" description="Coil 2" evidence="4">
    <location>
        <begin position="255"/>
        <end position="393"/>
    </location>
</feature>
<feature type="region of interest" description="Tail" evidence="4">
    <location>
        <begin position="394"/>
        <end position="457"/>
    </location>
</feature>
<feature type="site" description="Stutter" evidence="4">
    <location>
        <position position="337"/>
    </location>
</feature>
<feature type="modified residue" description="N-acetylserine" evidence="2">
    <location>
        <position position="2"/>
    </location>
</feature>
<feature type="modified residue" description="Phosphoserine" evidence="2">
    <location>
        <position position="2"/>
    </location>
</feature>
<feature type="modified residue" description="Dimethylated arginine; alternate" evidence="2">
    <location>
        <position position="15"/>
    </location>
</feature>
<feature type="modified residue" description="Omega-N-methylarginine; alternate" evidence="2">
    <location>
        <position position="15"/>
    </location>
</feature>
<feature type="modified residue" description="Phosphoserine" evidence="2">
    <location>
        <position position="47"/>
    </location>
</feature>
<feature type="modified residue" description="Phosphoserine" evidence="2">
    <location>
        <position position="65"/>
    </location>
</feature>
<feature type="modified residue" description="Phosphothreonine" evidence="2">
    <location>
        <position position="91"/>
    </location>
</feature>
<feature type="modified residue" description="N6-acetyllysine" evidence="2">
    <location>
        <position position="173"/>
    </location>
</feature>
<feature type="modified residue" description="Phosphoserine" evidence="3">
    <location>
        <position position="211"/>
    </location>
</feature>
<feature type="modified residue" description="Phosphoserine" evidence="2">
    <location>
        <position position="246"/>
    </location>
</feature>
<feature type="modified residue" description="Phosphoserine" evidence="11">
    <location>
        <position position="248"/>
    </location>
</feature>
<feature type="modified residue" description="Phosphothreonine" evidence="2">
    <location>
        <position position="283"/>
    </location>
</feature>
<feature type="glycosylation site" description="O-linked (GlcNAc) serine" evidence="2">
    <location>
        <position position="7"/>
    </location>
</feature>
<feature type="cross-link" description="Glycyl lysine isopeptide (Lys-Gly) (interchain with G-Cter in SUMO2)" evidence="2">
    <location>
        <position position="124"/>
    </location>
</feature>
<feature type="cross-link" description="Glycyl lysine isopeptide (Lys-Gly) (interchain with G-Cter in SUMO2)" evidence="2">
    <location>
        <position position="259"/>
    </location>
</feature>
<feature type="cross-link" description="Glycyl lysine isopeptide (Lys-Gly) (interchain with G-Cter in SUMO2)" evidence="2">
    <location>
        <position position="280"/>
    </location>
</feature>
<feature type="cross-link" description="Glycyl lysine isopeptide (Lys-Gly) (interchain with G-Cter in SUMO2)" evidence="2">
    <location>
        <position position="290"/>
    </location>
</feature>
<feature type="cross-link" description="Glycyl lysine isopeptide (Lys-Gly) (interchain with G-Cter in SUMO2)" evidence="2">
    <location>
        <position position="325"/>
    </location>
</feature>
<organism>
    <name type="scientific">Rattus norvegicus</name>
    <name type="common">Rat</name>
    <dbReference type="NCBI Taxonomy" id="10116"/>
    <lineage>
        <taxon>Eukaryota</taxon>
        <taxon>Metazoa</taxon>
        <taxon>Chordata</taxon>
        <taxon>Craniata</taxon>
        <taxon>Vertebrata</taxon>
        <taxon>Euteleostomi</taxon>
        <taxon>Mammalia</taxon>
        <taxon>Eutheria</taxon>
        <taxon>Euarchontoglires</taxon>
        <taxon>Glires</taxon>
        <taxon>Rodentia</taxon>
        <taxon>Myomorpha</taxon>
        <taxon>Muroidea</taxon>
        <taxon>Muridae</taxon>
        <taxon>Murinae</taxon>
        <taxon>Rattus</taxon>
    </lineage>
</organism>
<protein>
    <recommendedName>
        <fullName>Keratin, type II cytoskeletal 7</fullName>
    </recommendedName>
    <alternativeName>
        <fullName>Cytokeratin-7</fullName>
        <shortName>CK-7</shortName>
    </alternativeName>
    <alternativeName>
        <fullName>Keratin-7</fullName>
        <shortName>K7</shortName>
    </alternativeName>
    <alternativeName>
        <fullName>Type-II keratin Kb7</fullName>
    </alternativeName>
</protein>
<reference evidence="8" key="1">
    <citation type="journal article" date="2004" name="Nature">
        <title>Genome sequence of the Brown Norway rat yields insights into mammalian evolution.</title>
        <authorList>
            <person name="Gibbs R.A."/>
            <person name="Weinstock G.M."/>
            <person name="Metzker M.L."/>
            <person name="Muzny D.M."/>
            <person name="Sodergren E.J."/>
            <person name="Scherer S."/>
            <person name="Scott G."/>
            <person name="Steffen D."/>
            <person name="Worley K.C."/>
            <person name="Burch P.E."/>
            <person name="Okwuonu G."/>
            <person name="Hines S."/>
            <person name="Lewis L."/>
            <person name="Deramo C."/>
            <person name="Delgado O."/>
            <person name="Dugan-Rocha S."/>
            <person name="Miner G."/>
            <person name="Morgan M."/>
            <person name="Hawes A."/>
            <person name="Gill R."/>
            <person name="Holt R.A."/>
            <person name="Adams M.D."/>
            <person name="Amanatides P.G."/>
            <person name="Baden-Tillson H."/>
            <person name="Barnstead M."/>
            <person name="Chin S."/>
            <person name="Evans C.A."/>
            <person name="Ferriera S."/>
            <person name="Fosler C."/>
            <person name="Glodek A."/>
            <person name="Gu Z."/>
            <person name="Jennings D."/>
            <person name="Kraft C.L."/>
            <person name="Nguyen T."/>
            <person name="Pfannkoch C.M."/>
            <person name="Sitter C."/>
            <person name="Sutton G.G."/>
            <person name="Venter J.C."/>
            <person name="Woodage T."/>
            <person name="Smith D."/>
            <person name="Lee H.-M."/>
            <person name="Gustafson E."/>
            <person name="Cahill P."/>
            <person name="Kana A."/>
            <person name="Doucette-Stamm L."/>
            <person name="Weinstock K."/>
            <person name="Fechtel K."/>
            <person name="Weiss R.B."/>
            <person name="Dunn D.M."/>
            <person name="Green E.D."/>
            <person name="Blakesley R.W."/>
            <person name="Bouffard G.G."/>
            <person name="De Jong P.J."/>
            <person name="Osoegawa K."/>
            <person name="Zhu B."/>
            <person name="Marra M."/>
            <person name="Schein J."/>
            <person name="Bosdet I."/>
            <person name="Fjell C."/>
            <person name="Jones S."/>
            <person name="Krzywinski M."/>
            <person name="Mathewson C."/>
            <person name="Siddiqui A."/>
            <person name="Wye N."/>
            <person name="McPherson J."/>
            <person name="Zhao S."/>
            <person name="Fraser C.M."/>
            <person name="Shetty J."/>
            <person name="Shatsman S."/>
            <person name="Geer K."/>
            <person name="Chen Y."/>
            <person name="Abramzon S."/>
            <person name="Nierman W.C."/>
            <person name="Havlak P.H."/>
            <person name="Chen R."/>
            <person name="Durbin K.J."/>
            <person name="Egan A."/>
            <person name="Ren Y."/>
            <person name="Song X.-Z."/>
            <person name="Li B."/>
            <person name="Liu Y."/>
            <person name="Qin X."/>
            <person name="Cawley S."/>
            <person name="Cooney A.J."/>
            <person name="D'Souza L.M."/>
            <person name="Martin K."/>
            <person name="Wu J.Q."/>
            <person name="Gonzalez-Garay M.L."/>
            <person name="Jackson A.R."/>
            <person name="Kalafus K.J."/>
            <person name="McLeod M.P."/>
            <person name="Milosavljevic A."/>
            <person name="Virk D."/>
            <person name="Volkov A."/>
            <person name="Wheeler D.A."/>
            <person name="Zhang Z."/>
            <person name="Bailey J.A."/>
            <person name="Eichler E.E."/>
            <person name="Tuzun E."/>
            <person name="Birney E."/>
            <person name="Mongin E."/>
            <person name="Ureta-Vidal A."/>
            <person name="Woodwark C."/>
            <person name="Zdobnov E."/>
            <person name="Bork P."/>
            <person name="Suyama M."/>
            <person name="Torrents D."/>
            <person name="Alexandersson M."/>
            <person name="Trask B.J."/>
            <person name="Young J.M."/>
            <person name="Huang H."/>
            <person name="Wang H."/>
            <person name="Xing H."/>
            <person name="Daniels S."/>
            <person name="Gietzen D."/>
            <person name="Schmidt J."/>
            <person name="Stevens K."/>
            <person name="Vitt U."/>
            <person name="Wingrove J."/>
            <person name="Camara F."/>
            <person name="Mar Alba M."/>
            <person name="Abril J.F."/>
            <person name="Guigo R."/>
            <person name="Smit A."/>
            <person name="Dubchak I."/>
            <person name="Rubin E.M."/>
            <person name="Couronne O."/>
            <person name="Poliakov A."/>
            <person name="Huebner N."/>
            <person name="Ganten D."/>
            <person name="Goesele C."/>
            <person name="Hummel O."/>
            <person name="Kreitler T."/>
            <person name="Lee Y.-A."/>
            <person name="Monti J."/>
            <person name="Schulz H."/>
            <person name="Zimdahl H."/>
            <person name="Himmelbauer H."/>
            <person name="Lehrach H."/>
            <person name="Jacob H.J."/>
            <person name="Bromberg S."/>
            <person name="Gullings-Handley J."/>
            <person name="Jensen-Seaman M.I."/>
            <person name="Kwitek A.E."/>
            <person name="Lazar J."/>
            <person name="Pasko D."/>
            <person name="Tonellato P.J."/>
            <person name="Twigger S."/>
            <person name="Ponting C.P."/>
            <person name="Duarte J.M."/>
            <person name="Rice S."/>
            <person name="Goodstadt L."/>
            <person name="Beatson S.A."/>
            <person name="Emes R.D."/>
            <person name="Winter E.E."/>
            <person name="Webber C."/>
            <person name="Brandt P."/>
            <person name="Nyakatura G."/>
            <person name="Adetobi M."/>
            <person name="Chiaromonte F."/>
            <person name="Elnitski L."/>
            <person name="Eswara P."/>
            <person name="Hardison R.C."/>
            <person name="Hou M."/>
            <person name="Kolbe D."/>
            <person name="Makova K."/>
            <person name="Miller W."/>
            <person name="Nekrutenko A."/>
            <person name="Riemer C."/>
            <person name="Schwartz S."/>
            <person name="Taylor J."/>
            <person name="Yang S."/>
            <person name="Zhang Y."/>
            <person name="Lindpaintner K."/>
            <person name="Andrews T.D."/>
            <person name="Caccamo M."/>
            <person name="Clamp M."/>
            <person name="Clarke L."/>
            <person name="Curwen V."/>
            <person name="Durbin R.M."/>
            <person name="Eyras E."/>
            <person name="Searle S.M."/>
            <person name="Cooper G.M."/>
            <person name="Batzoglou S."/>
            <person name="Brudno M."/>
            <person name="Sidow A."/>
            <person name="Stone E.A."/>
            <person name="Payseur B.A."/>
            <person name="Bourque G."/>
            <person name="Lopez-Otin C."/>
            <person name="Puente X.S."/>
            <person name="Chakrabarti K."/>
            <person name="Chatterji S."/>
            <person name="Dewey C."/>
            <person name="Pachter L."/>
            <person name="Bray N."/>
            <person name="Yap V.B."/>
            <person name="Caspi A."/>
            <person name="Tesler G."/>
            <person name="Pevzner P.A."/>
            <person name="Haussler D."/>
            <person name="Roskin K.M."/>
            <person name="Baertsch R."/>
            <person name="Clawson H."/>
            <person name="Furey T.S."/>
            <person name="Hinrichs A.S."/>
            <person name="Karolchik D."/>
            <person name="Kent W.J."/>
            <person name="Rosenbloom K.R."/>
            <person name="Trumbower H."/>
            <person name="Weirauch M."/>
            <person name="Cooper D.N."/>
            <person name="Stenson P.D."/>
            <person name="Ma B."/>
            <person name="Brent M."/>
            <person name="Arumugam M."/>
            <person name="Shteynberg D."/>
            <person name="Copley R.R."/>
            <person name="Taylor M.S."/>
            <person name="Riethman H."/>
            <person name="Mudunuri U."/>
            <person name="Peterson J."/>
            <person name="Guyer M."/>
            <person name="Felsenfeld A."/>
            <person name="Old S."/>
            <person name="Mockrin S."/>
            <person name="Collins F.S."/>
        </authorList>
    </citation>
    <scope>NUCLEOTIDE SEQUENCE [LARGE SCALE GENOMIC DNA]</scope>
    <source>
        <strain evidence="6">Brown Norway</strain>
    </source>
</reference>
<reference evidence="8 9" key="2">
    <citation type="journal article" date="2004" name="Eur. J. Cell Biol.">
        <title>Comprehensive analysis of keratin gene clusters in humans and rodents.</title>
        <authorList>
            <person name="Hesse M."/>
            <person name="Zimek A."/>
            <person name="Weber K."/>
            <person name="Magin T.M."/>
        </authorList>
    </citation>
    <scope>IDENTIFICATION</scope>
</reference>
<reference key="3">
    <citation type="journal article" date="2012" name="Nat. Commun.">
        <title>Quantitative maps of protein phosphorylation sites across 14 different rat organs and tissues.</title>
        <authorList>
            <person name="Lundby A."/>
            <person name="Secher A."/>
            <person name="Lage K."/>
            <person name="Nordsborg N.B."/>
            <person name="Dmytriyev A."/>
            <person name="Lundby C."/>
            <person name="Olsen J.V."/>
        </authorList>
    </citation>
    <scope>PHOSPHORYLATION [LARGE SCALE ANALYSIS] AT SER-248</scope>
    <scope>IDENTIFICATION BY MASS SPECTROMETRY [LARGE SCALE ANALYSIS]</scope>
</reference>